<evidence type="ECO:0000255" key="1">
    <source>
        <dbReference type="HAMAP-Rule" id="MF_00120"/>
    </source>
</evidence>
<organism>
    <name type="scientific">Rickettsia typhi (strain ATCC VR-144 / Wilmington)</name>
    <dbReference type="NCBI Taxonomy" id="257363"/>
    <lineage>
        <taxon>Bacteria</taxon>
        <taxon>Pseudomonadati</taxon>
        <taxon>Pseudomonadota</taxon>
        <taxon>Alphaproteobacteria</taxon>
        <taxon>Rickettsiales</taxon>
        <taxon>Rickettsiaceae</taxon>
        <taxon>Rickettsieae</taxon>
        <taxon>Rickettsia</taxon>
        <taxon>typhus group</taxon>
    </lineage>
</organism>
<comment type="function">
    <text evidence="1">Allows the formation of correctly charged Gln-tRNA(Gln) through the transamidation of misacylated Glu-tRNA(Gln) in organisms which lack glutaminyl-tRNA synthetase. The reaction takes place in the presence of glutamine and ATP through an activated gamma-phospho-Glu-tRNA(Gln).</text>
</comment>
<comment type="catalytic activity">
    <reaction evidence="1">
        <text>L-glutamyl-tRNA(Gln) + L-glutamine + ATP + H2O = L-glutaminyl-tRNA(Gln) + L-glutamate + ADP + phosphate + H(+)</text>
        <dbReference type="Rhea" id="RHEA:17521"/>
        <dbReference type="Rhea" id="RHEA-COMP:9681"/>
        <dbReference type="Rhea" id="RHEA-COMP:9684"/>
        <dbReference type="ChEBI" id="CHEBI:15377"/>
        <dbReference type="ChEBI" id="CHEBI:15378"/>
        <dbReference type="ChEBI" id="CHEBI:29985"/>
        <dbReference type="ChEBI" id="CHEBI:30616"/>
        <dbReference type="ChEBI" id="CHEBI:43474"/>
        <dbReference type="ChEBI" id="CHEBI:58359"/>
        <dbReference type="ChEBI" id="CHEBI:78520"/>
        <dbReference type="ChEBI" id="CHEBI:78521"/>
        <dbReference type="ChEBI" id="CHEBI:456216"/>
        <dbReference type="EC" id="6.3.5.7"/>
    </reaction>
</comment>
<comment type="subunit">
    <text evidence="1">Heterotrimer of A, B and C subunits.</text>
</comment>
<comment type="similarity">
    <text evidence="1">Belongs to the amidase family. GatA subfamily.</text>
</comment>
<accession>Q68XL6</accession>
<keyword id="KW-0067">ATP-binding</keyword>
<keyword id="KW-0436">Ligase</keyword>
<keyword id="KW-0547">Nucleotide-binding</keyword>
<keyword id="KW-0648">Protein biosynthesis</keyword>
<feature type="chain" id="PRO_0000241150" description="Glutamyl-tRNA(Gln) amidotransferase subunit A">
    <location>
        <begin position="1"/>
        <end position="493"/>
    </location>
</feature>
<feature type="active site" description="Charge relay system" evidence="1">
    <location>
        <position position="78"/>
    </location>
</feature>
<feature type="active site" description="Charge relay system" evidence="1">
    <location>
        <position position="158"/>
    </location>
</feature>
<feature type="active site" description="Acyl-ester intermediate" evidence="1">
    <location>
        <position position="182"/>
    </location>
</feature>
<reference key="1">
    <citation type="journal article" date="2004" name="J. Bacteriol.">
        <title>Complete genome sequence of Rickettsia typhi and comparison with sequences of other Rickettsiae.</title>
        <authorList>
            <person name="McLeod M.P."/>
            <person name="Qin X."/>
            <person name="Karpathy S.E."/>
            <person name="Gioia J."/>
            <person name="Highlander S.K."/>
            <person name="Fox G.E."/>
            <person name="McNeill T.Z."/>
            <person name="Jiang H."/>
            <person name="Muzny D."/>
            <person name="Jacob L.S."/>
            <person name="Hawes A.C."/>
            <person name="Sodergren E."/>
            <person name="Gill R."/>
            <person name="Hume J."/>
            <person name="Morgan M."/>
            <person name="Fan G."/>
            <person name="Amin A.G."/>
            <person name="Gibbs R.A."/>
            <person name="Hong C."/>
            <person name="Yu X.-J."/>
            <person name="Walker D.H."/>
            <person name="Weinstock G.M."/>
        </authorList>
    </citation>
    <scope>NUCLEOTIDE SEQUENCE [LARGE SCALE GENOMIC DNA]</scope>
    <source>
        <strain>ATCC VR-144 / Wilmington</strain>
    </source>
</reference>
<gene>
    <name evidence="1" type="primary">gatA</name>
    <name type="ordered locus">RT0141</name>
</gene>
<dbReference type="EC" id="6.3.5.7" evidence="1"/>
<dbReference type="EMBL" id="AE017197">
    <property type="protein sequence ID" value="AAU03626.1"/>
    <property type="molecule type" value="Genomic_DNA"/>
</dbReference>
<dbReference type="RefSeq" id="WP_011190613.1">
    <property type="nucleotide sequence ID" value="NC_006142.1"/>
</dbReference>
<dbReference type="SMR" id="Q68XL6"/>
<dbReference type="KEGG" id="rty:RT0141"/>
<dbReference type="eggNOG" id="COG0154">
    <property type="taxonomic scope" value="Bacteria"/>
</dbReference>
<dbReference type="HOGENOM" id="CLU_009600_0_3_5"/>
<dbReference type="OrthoDB" id="9811471at2"/>
<dbReference type="Proteomes" id="UP000000604">
    <property type="component" value="Chromosome"/>
</dbReference>
<dbReference type="GO" id="GO:0030956">
    <property type="term" value="C:glutamyl-tRNA(Gln) amidotransferase complex"/>
    <property type="evidence" value="ECO:0007669"/>
    <property type="project" value="InterPro"/>
</dbReference>
<dbReference type="GO" id="GO:0005524">
    <property type="term" value="F:ATP binding"/>
    <property type="evidence" value="ECO:0007669"/>
    <property type="project" value="UniProtKB-KW"/>
</dbReference>
<dbReference type="GO" id="GO:0050567">
    <property type="term" value="F:glutaminyl-tRNA synthase (glutamine-hydrolyzing) activity"/>
    <property type="evidence" value="ECO:0007669"/>
    <property type="project" value="UniProtKB-UniRule"/>
</dbReference>
<dbReference type="GO" id="GO:0006412">
    <property type="term" value="P:translation"/>
    <property type="evidence" value="ECO:0007669"/>
    <property type="project" value="UniProtKB-UniRule"/>
</dbReference>
<dbReference type="Gene3D" id="3.90.1300.10">
    <property type="entry name" value="Amidase signature (AS) domain"/>
    <property type="match status" value="1"/>
</dbReference>
<dbReference type="HAMAP" id="MF_00120">
    <property type="entry name" value="GatA"/>
    <property type="match status" value="1"/>
</dbReference>
<dbReference type="InterPro" id="IPR000120">
    <property type="entry name" value="Amidase"/>
</dbReference>
<dbReference type="InterPro" id="IPR020556">
    <property type="entry name" value="Amidase_CS"/>
</dbReference>
<dbReference type="InterPro" id="IPR023631">
    <property type="entry name" value="Amidase_dom"/>
</dbReference>
<dbReference type="InterPro" id="IPR036928">
    <property type="entry name" value="AS_sf"/>
</dbReference>
<dbReference type="InterPro" id="IPR004412">
    <property type="entry name" value="GatA"/>
</dbReference>
<dbReference type="NCBIfam" id="TIGR00132">
    <property type="entry name" value="gatA"/>
    <property type="match status" value="1"/>
</dbReference>
<dbReference type="PANTHER" id="PTHR11895:SF151">
    <property type="entry name" value="GLUTAMYL-TRNA(GLN) AMIDOTRANSFERASE SUBUNIT A"/>
    <property type="match status" value="1"/>
</dbReference>
<dbReference type="PANTHER" id="PTHR11895">
    <property type="entry name" value="TRANSAMIDASE"/>
    <property type="match status" value="1"/>
</dbReference>
<dbReference type="Pfam" id="PF01425">
    <property type="entry name" value="Amidase"/>
    <property type="match status" value="1"/>
</dbReference>
<dbReference type="SUPFAM" id="SSF75304">
    <property type="entry name" value="Amidase signature (AS) enzymes"/>
    <property type="match status" value="1"/>
</dbReference>
<dbReference type="PROSITE" id="PS00571">
    <property type="entry name" value="AMIDASES"/>
    <property type="match status" value="1"/>
</dbReference>
<protein>
    <recommendedName>
        <fullName evidence="1">Glutamyl-tRNA(Gln) amidotransferase subunit A</fullName>
        <shortName evidence="1">Glu-ADT subunit A</shortName>
        <ecNumber evidence="1">6.3.5.7</ecNumber>
    </recommendedName>
</protein>
<name>GATA_RICTY</name>
<sequence>MTELNKLTVADSVKGLKNKDFTSKELVNAHIKQIEKYKNLNAYVTETFDLALKQAEEADQNYAQNKARTLEGIPFAVKDLFCTKGIRTTACSNILKNFIPHYESSVTKNIFDKGGVMLGKTNMDEFAMGSTNITSCFGNVISPWKANDDNSDLVPGGSSGGSAAAVSGFMASAALGSDTGGSVRQPASFTGLVGFKPTYGRCSRYGMVSFASSLDQAGIFTRSVLDSSIMLEAMMGFDEKDSTSINAKVPELQSAIGSSMKNMKIGVPLSLGEGGIIEHDIMKMWHDTIELLKNAGAEIVDITLPHAKYGVAVYYVIAPAEAASNLSRYDGVRYGLRVEYENMTLDEMYEMTRSAGFGEEVKRRIMLGTYVLSSNCMDAYYFKAQKVRRLVANDFNNAFTKVNAILLPTAPSAAFKIGEKQNDPTIMYLNDLFTIPASLAGLPCVSVPAGLSARGLPLGMQIIGKQLDEYNVLKVASTIETGVKHIKFEPAGF</sequence>
<proteinExistence type="inferred from homology"/>